<dbReference type="EC" id="2.8.4.4" evidence="1"/>
<dbReference type="EMBL" id="CP000962">
    <property type="protein sequence ID" value="ACA57106.1"/>
    <property type="molecule type" value="Genomic_DNA"/>
</dbReference>
<dbReference type="RefSeq" id="WP_012344892.1">
    <property type="nucleotide sequence ID" value="NC_010520.1"/>
</dbReference>
<dbReference type="SMR" id="B1KWJ5"/>
<dbReference type="KEGG" id="cbl:CLK_1782"/>
<dbReference type="HOGENOM" id="CLU_018697_0_1_9"/>
<dbReference type="GO" id="GO:0005829">
    <property type="term" value="C:cytosol"/>
    <property type="evidence" value="ECO:0007669"/>
    <property type="project" value="TreeGrafter"/>
</dbReference>
<dbReference type="GO" id="GO:0051539">
    <property type="term" value="F:4 iron, 4 sulfur cluster binding"/>
    <property type="evidence" value="ECO:0007669"/>
    <property type="project" value="UniProtKB-UniRule"/>
</dbReference>
<dbReference type="GO" id="GO:0035599">
    <property type="term" value="F:aspartic acid methylthiotransferase activity"/>
    <property type="evidence" value="ECO:0007669"/>
    <property type="project" value="TreeGrafter"/>
</dbReference>
<dbReference type="GO" id="GO:0046872">
    <property type="term" value="F:metal ion binding"/>
    <property type="evidence" value="ECO:0007669"/>
    <property type="project" value="UniProtKB-KW"/>
</dbReference>
<dbReference type="GO" id="GO:0103039">
    <property type="term" value="F:protein methylthiotransferase activity"/>
    <property type="evidence" value="ECO:0007669"/>
    <property type="project" value="UniProtKB-EC"/>
</dbReference>
<dbReference type="GO" id="GO:0006400">
    <property type="term" value="P:tRNA modification"/>
    <property type="evidence" value="ECO:0007669"/>
    <property type="project" value="InterPro"/>
</dbReference>
<dbReference type="CDD" id="cd01335">
    <property type="entry name" value="Radical_SAM"/>
    <property type="match status" value="1"/>
</dbReference>
<dbReference type="FunFam" id="2.40.50.140:FF:000210">
    <property type="entry name" value="Ribosomal protein S12 methylthiotransferase RimO"/>
    <property type="match status" value="1"/>
</dbReference>
<dbReference type="FunFam" id="3.40.50.12160:FF:000002">
    <property type="entry name" value="Ribosomal protein S12 methylthiotransferase RimO"/>
    <property type="match status" value="1"/>
</dbReference>
<dbReference type="FunFam" id="3.80.30.20:FF:000001">
    <property type="entry name" value="tRNA-2-methylthio-N(6)-dimethylallyladenosine synthase 2"/>
    <property type="match status" value="1"/>
</dbReference>
<dbReference type="Gene3D" id="3.40.50.12160">
    <property type="entry name" value="Methylthiotransferase, N-terminal domain"/>
    <property type="match status" value="1"/>
</dbReference>
<dbReference type="Gene3D" id="2.40.50.140">
    <property type="entry name" value="Nucleic acid-binding proteins"/>
    <property type="match status" value="1"/>
</dbReference>
<dbReference type="Gene3D" id="3.80.30.20">
    <property type="entry name" value="tm_1862 like domain"/>
    <property type="match status" value="1"/>
</dbReference>
<dbReference type="HAMAP" id="MF_01865">
    <property type="entry name" value="MTTase_RimO"/>
    <property type="match status" value="1"/>
</dbReference>
<dbReference type="InterPro" id="IPR006638">
    <property type="entry name" value="Elp3/MiaA/NifB-like_rSAM"/>
</dbReference>
<dbReference type="InterPro" id="IPR005839">
    <property type="entry name" value="Methylthiotransferase"/>
</dbReference>
<dbReference type="InterPro" id="IPR020612">
    <property type="entry name" value="Methylthiotransferase_CS"/>
</dbReference>
<dbReference type="InterPro" id="IPR013848">
    <property type="entry name" value="Methylthiotransferase_N"/>
</dbReference>
<dbReference type="InterPro" id="IPR038135">
    <property type="entry name" value="Methylthiotransferase_N_sf"/>
</dbReference>
<dbReference type="InterPro" id="IPR012340">
    <property type="entry name" value="NA-bd_OB-fold"/>
</dbReference>
<dbReference type="InterPro" id="IPR005840">
    <property type="entry name" value="Ribosomal_uS12_MeSTrfase_RimO"/>
</dbReference>
<dbReference type="InterPro" id="IPR007197">
    <property type="entry name" value="rSAM"/>
</dbReference>
<dbReference type="InterPro" id="IPR023404">
    <property type="entry name" value="rSAM_horseshoe"/>
</dbReference>
<dbReference type="InterPro" id="IPR002792">
    <property type="entry name" value="TRAM_dom"/>
</dbReference>
<dbReference type="NCBIfam" id="TIGR01125">
    <property type="entry name" value="30S ribosomal protein S12 methylthiotransferase RimO"/>
    <property type="match status" value="1"/>
</dbReference>
<dbReference type="NCBIfam" id="TIGR00089">
    <property type="entry name" value="MiaB/RimO family radical SAM methylthiotransferase"/>
    <property type="match status" value="1"/>
</dbReference>
<dbReference type="PANTHER" id="PTHR43837">
    <property type="entry name" value="RIBOSOMAL PROTEIN S12 METHYLTHIOTRANSFERASE RIMO"/>
    <property type="match status" value="1"/>
</dbReference>
<dbReference type="PANTHER" id="PTHR43837:SF1">
    <property type="entry name" value="RIBOSOMAL PROTEIN US12 METHYLTHIOTRANSFERASE RIMO"/>
    <property type="match status" value="1"/>
</dbReference>
<dbReference type="Pfam" id="PF04055">
    <property type="entry name" value="Radical_SAM"/>
    <property type="match status" value="1"/>
</dbReference>
<dbReference type="Pfam" id="PF18693">
    <property type="entry name" value="TRAM_2"/>
    <property type="match status" value="1"/>
</dbReference>
<dbReference type="Pfam" id="PF00919">
    <property type="entry name" value="UPF0004"/>
    <property type="match status" value="1"/>
</dbReference>
<dbReference type="SFLD" id="SFLDG01082">
    <property type="entry name" value="B12-binding_domain_containing"/>
    <property type="match status" value="1"/>
</dbReference>
<dbReference type="SFLD" id="SFLDS00029">
    <property type="entry name" value="Radical_SAM"/>
    <property type="match status" value="1"/>
</dbReference>
<dbReference type="SFLD" id="SFLDF00274">
    <property type="entry name" value="ribosomal_protein_S12_methylth"/>
    <property type="match status" value="1"/>
</dbReference>
<dbReference type="SMART" id="SM00729">
    <property type="entry name" value="Elp3"/>
    <property type="match status" value="1"/>
</dbReference>
<dbReference type="SUPFAM" id="SSF102114">
    <property type="entry name" value="Radical SAM enzymes"/>
    <property type="match status" value="1"/>
</dbReference>
<dbReference type="PROSITE" id="PS51449">
    <property type="entry name" value="MTTASE_N"/>
    <property type="match status" value="1"/>
</dbReference>
<dbReference type="PROSITE" id="PS01278">
    <property type="entry name" value="MTTASE_RADICAL"/>
    <property type="match status" value="1"/>
</dbReference>
<dbReference type="PROSITE" id="PS51918">
    <property type="entry name" value="RADICAL_SAM"/>
    <property type="match status" value="1"/>
</dbReference>
<dbReference type="PROSITE" id="PS50926">
    <property type="entry name" value="TRAM"/>
    <property type="match status" value="1"/>
</dbReference>
<comment type="function">
    <text evidence="1">Catalyzes the methylthiolation of an aspartic acid residue of ribosomal protein uS12.</text>
</comment>
<comment type="catalytic activity">
    <reaction evidence="1">
        <text>L-aspartate(89)-[ribosomal protein uS12]-hydrogen + (sulfur carrier)-SH + AH2 + 2 S-adenosyl-L-methionine = 3-methylsulfanyl-L-aspartate(89)-[ribosomal protein uS12]-hydrogen + (sulfur carrier)-H + 5'-deoxyadenosine + L-methionine + A + S-adenosyl-L-homocysteine + 2 H(+)</text>
        <dbReference type="Rhea" id="RHEA:37087"/>
        <dbReference type="Rhea" id="RHEA-COMP:10460"/>
        <dbReference type="Rhea" id="RHEA-COMP:10461"/>
        <dbReference type="Rhea" id="RHEA-COMP:14737"/>
        <dbReference type="Rhea" id="RHEA-COMP:14739"/>
        <dbReference type="ChEBI" id="CHEBI:13193"/>
        <dbReference type="ChEBI" id="CHEBI:15378"/>
        <dbReference type="ChEBI" id="CHEBI:17319"/>
        <dbReference type="ChEBI" id="CHEBI:17499"/>
        <dbReference type="ChEBI" id="CHEBI:29917"/>
        <dbReference type="ChEBI" id="CHEBI:29961"/>
        <dbReference type="ChEBI" id="CHEBI:57844"/>
        <dbReference type="ChEBI" id="CHEBI:57856"/>
        <dbReference type="ChEBI" id="CHEBI:59789"/>
        <dbReference type="ChEBI" id="CHEBI:64428"/>
        <dbReference type="ChEBI" id="CHEBI:73599"/>
        <dbReference type="EC" id="2.8.4.4"/>
    </reaction>
</comment>
<comment type="cofactor">
    <cofactor evidence="1">
        <name>[4Fe-4S] cluster</name>
        <dbReference type="ChEBI" id="CHEBI:49883"/>
    </cofactor>
    <text evidence="1">Binds 2 [4Fe-4S] clusters. One cluster is coordinated with 3 cysteines and an exchangeable S-adenosyl-L-methionine.</text>
</comment>
<comment type="subcellular location">
    <subcellularLocation>
        <location evidence="1">Cytoplasm</location>
    </subcellularLocation>
</comment>
<comment type="similarity">
    <text evidence="1">Belongs to the methylthiotransferase family. RimO subfamily.</text>
</comment>
<keyword id="KW-0004">4Fe-4S</keyword>
<keyword id="KW-0963">Cytoplasm</keyword>
<keyword id="KW-0408">Iron</keyword>
<keyword id="KW-0411">Iron-sulfur</keyword>
<keyword id="KW-0479">Metal-binding</keyword>
<keyword id="KW-0949">S-adenosyl-L-methionine</keyword>
<keyword id="KW-0808">Transferase</keyword>
<protein>
    <recommendedName>
        <fullName evidence="1">Ribosomal protein uS12 methylthiotransferase RimO</fullName>
        <shortName evidence="1">uS12 MTTase</shortName>
        <shortName evidence="1">uS12 methylthiotransferase</shortName>
        <ecNumber evidence="1">2.8.4.4</ecNumber>
    </recommendedName>
    <alternativeName>
        <fullName evidence="1">Ribosomal protein uS12 (aspartate-C(3))-methylthiotransferase</fullName>
    </alternativeName>
    <alternativeName>
        <fullName evidence="1">Ribosome maturation factor RimO</fullName>
    </alternativeName>
</protein>
<reference key="1">
    <citation type="journal article" date="2007" name="PLoS ONE">
        <title>Analysis of the neurotoxin complex genes in Clostridium botulinum A1-A4 and B1 strains: BoNT/A3, /Ba4 and /B1 clusters are located within plasmids.</title>
        <authorList>
            <person name="Smith T.J."/>
            <person name="Hill K.K."/>
            <person name="Foley B.T."/>
            <person name="Detter J.C."/>
            <person name="Munk A.C."/>
            <person name="Bruce D.C."/>
            <person name="Doggett N.A."/>
            <person name="Smith L.A."/>
            <person name="Marks J.D."/>
            <person name="Xie G."/>
            <person name="Brettin T.S."/>
        </authorList>
    </citation>
    <scope>NUCLEOTIDE SEQUENCE [LARGE SCALE GENOMIC DNA]</scope>
    <source>
        <strain>Loch Maree / Type A3</strain>
    </source>
</reference>
<gene>
    <name evidence="1" type="primary">rimO</name>
    <name type="ordered locus">CLK_1782</name>
</gene>
<evidence type="ECO:0000255" key="1">
    <source>
        <dbReference type="HAMAP-Rule" id="MF_01865"/>
    </source>
</evidence>
<evidence type="ECO:0000255" key="2">
    <source>
        <dbReference type="PROSITE-ProRule" id="PRU01266"/>
    </source>
</evidence>
<feature type="chain" id="PRO_0000374781" description="Ribosomal protein uS12 methylthiotransferase RimO">
    <location>
        <begin position="1"/>
        <end position="445"/>
    </location>
</feature>
<feature type="domain" description="MTTase N-terminal" evidence="1">
    <location>
        <begin position="4"/>
        <end position="119"/>
    </location>
</feature>
<feature type="domain" description="Radical SAM core" evidence="2">
    <location>
        <begin position="142"/>
        <end position="372"/>
    </location>
</feature>
<feature type="domain" description="TRAM" evidence="1">
    <location>
        <begin position="375"/>
        <end position="441"/>
    </location>
</feature>
<feature type="binding site" evidence="1">
    <location>
        <position position="13"/>
    </location>
    <ligand>
        <name>[4Fe-4S] cluster</name>
        <dbReference type="ChEBI" id="CHEBI:49883"/>
        <label>1</label>
    </ligand>
</feature>
<feature type="binding site" evidence="1">
    <location>
        <position position="48"/>
    </location>
    <ligand>
        <name>[4Fe-4S] cluster</name>
        <dbReference type="ChEBI" id="CHEBI:49883"/>
        <label>1</label>
    </ligand>
</feature>
<feature type="binding site" evidence="1">
    <location>
        <position position="82"/>
    </location>
    <ligand>
        <name>[4Fe-4S] cluster</name>
        <dbReference type="ChEBI" id="CHEBI:49883"/>
        <label>1</label>
    </ligand>
</feature>
<feature type="binding site" evidence="1">
    <location>
        <position position="156"/>
    </location>
    <ligand>
        <name>[4Fe-4S] cluster</name>
        <dbReference type="ChEBI" id="CHEBI:49883"/>
        <label>2</label>
        <note>4Fe-4S-S-AdoMet</note>
    </ligand>
</feature>
<feature type="binding site" evidence="1">
    <location>
        <position position="160"/>
    </location>
    <ligand>
        <name>[4Fe-4S] cluster</name>
        <dbReference type="ChEBI" id="CHEBI:49883"/>
        <label>2</label>
        <note>4Fe-4S-S-AdoMet</note>
    </ligand>
</feature>
<feature type="binding site" evidence="1">
    <location>
        <position position="163"/>
    </location>
    <ligand>
        <name>[4Fe-4S] cluster</name>
        <dbReference type="ChEBI" id="CHEBI:49883"/>
        <label>2</label>
        <note>4Fe-4S-S-AdoMet</note>
    </ligand>
</feature>
<proteinExistence type="inferred from homology"/>
<organism>
    <name type="scientific">Clostridium botulinum (strain Loch Maree / Type A3)</name>
    <dbReference type="NCBI Taxonomy" id="498214"/>
    <lineage>
        <taxon>Bacteria</taxon>
        <taxon>Bacillati</taxon>
        <taxon>Bacillota</taxon>
        <taxon>Clostridia</taxon>
        <taxon>Eubacteriales</taxon>
        <taxon>Clostridiaceae</taxon>
        <taxon>Clostridium</taxon>
    </lineage>
</organism>
<name>RIMO_CLOBM</name>
<sequence>MEKIKVALVSLGCDKNRIDSELMLYKLNEEAELVKDPKEAQVIIVNTCGFIETAKEESINTILQMASYKKTHNCKVLVVTGCLTQRYKGELKELIPEMDIMLGVNDYDKLLESIKVFLKSGEKSFYHKYSDTKINEGNRILTTPTYTAYVRIAEGCNNFCTYCAIPRIRGKYRSRKKENILKEVENLAKQGVKEIILIAQDTTMYGIDIHGKKVLHELLRDISKVEGVKWIRLLYCYPEEITEELIEEIKNNDKVCKYLDLPIQQISNSVLKRMGRKTTKETIINIIKKLRKEIEGITLRTSLIVGFPGETEGEFSELKEFVSDIKLDKLGVFKYSKEEGTSAALMEEQIDEEIKEKREEEIMILQQSISKDINKEKIGKIYEVIVEGIKEDMYYGRNYEMSPEIDGEIYFEKDENVKIGDIIKVKVTHSLEYDLIGVVYNELSK</sequence>
<accession>B1KWJ5</accession>